<evidence type="ECO:0000250" key="1">
    <source>
        <dbReference type="UniProtKB" id="Q05468"/>
    </source>
</evidence>
<evidence type="ECO:0000256" key="2">
    <source>
        <dbReference type="SAM" id="MobiDB-lite"/>
    </source>
</evidence>
<evidence type="ECO:0000269" key="3">
    <source>
    </source>
</evidence>
<evidence type="ECO:0000269" key="4">
    <source>
    </source>
</evidence>
<evidence type="ECO:0000305" key="5"/>
<evidence type="ECO:0000312" key="6">
    <source>
        <dbReference type="PomBase" id="SPAC1142.01"/>
    </source>
</evidence>
<gene>
    <name evidence="1" type="primary">rqc1</name>
    <name evidence="6" type="ORF">SPAC1142.01</name>
    <name type="ORF">SPAC17G6.18</name>
</gene>
<reference key="1">
    <citation type="journal article" date="2002" name="Nature">
        <title>The genome sequence of Schizosaccharomyces pombe.</title>
        <authorList>
            <person name="Wood V."/>
            <person name="Gwilliam R."/>
            <person name="Rajandream M.A."/>
            <person name="Lyne M.H."/>
            <person name="Lyne R."/>
            <person name="Stewart A."/>
            <person name="Sgouros J.G."/>
            <person name="Peat N."/>
            <person name="Hayles J."/>
            <person name="Baker S.G."/>
            <person name="Basham D."/>
            <person name="Bowman S."/>
            <person name="Brooks K."/>
            <person name="Brown D."/>
            <person name="Brown S."/>
            <person name="Chillingworth T."/>
            <person name="Churcher C.M."/>
            <person name="Collins M."/>
            <person name="Connor R."/>
            <person name="Cronin A."/>
            <person name="Davis P."/>
            <person name="Feltwell T."/>
            <person name="Fraser A."/>
            <person name="Gentles S."/>
            <person name="Goble A."/>
            <person name="Hamlin N."/>
            <person name="Harris D.E."/>
            <person name="Hidalgo J."/>
            <person name="Hodgson G."/>
            <person name="Holroyd S."/>
            <person name="Hornsby T."/>
            <person name="Howarth S."/>
            <person name="Huckle E.J."/>
            <person name="Hunt S."/>
            <person name="Jagels K."/>
            <person name="James K.D."/>
            <person name="Jones L."/>
            <person name="Jones M."/>
            <person name="Leather S."/>
            <person name="McDonald S."/>
            <person name="McLean J."/>
            <person name="Mooney P."/>
            <person name="Moule S."/>
            <person name="Mungall K.L."/>
            <person name="Murphy L.D."/>
            <person name="Niblett D."/>
            <person name="Odell C."/>
            <person name="Oliver K."/>
            <person name="O'Neil S."/>
            <person name="Pearson D."/>
            <person name="Quail M.A."/>
            <person name="Rabbinowitsch E."/>
            <person name="Rutherford K.M."/>
            <person name="Rutter S."/>
            <person name="Saunders D."/>
            <person name="Seeger K."/>
            <person name="Sharp S."/>
            <person name="Skelton J."/>
            <person name="Simmonds M.N."/>
            <person name="Squares R."/>
            <person name="Squares S."/>
            <person name="Stevens K."/>
            <person name="Taylor K."/>
            <person name="Taylor R.G."/>
            <person name="Tivey A."/>
            <person name="Walsh S.V."/>
            <person name="Warren T."/>
            <person name="Whitehead S."/>
            <person name="Woodward J.R."/>
            <person name="Volckaert G."/>
            <person name="Aert R."/>
            <person name="Robben J."/>
            <person name="Grymonprez B."/>
            <person name="Weltjens I."/>
            <person name="Vanstreels E."/>
            <person name="Rieger M."/>
            <person name="Schaefer M."/>
            <person name="Mueller-Auer S."/>
            <person name="Gabel C."/>
            <person name="Fuchs M."/>
            <person name="Duesterhoeft A."/>
            <person name="Fritzc C."/>
            <person name="Holzer E."/>
            <person name="Moestl D."/>
            <person name="Hilbert H."/>
            <person name="Borzym K."/>
            <person name="Langer I."/>
            <person name="Beck A."/>
            <person name="Lehrach H."/>
            <person name="Reinhardt R."/>
            <person name="Pohl T.M."/>
            <person name="Eger P."/>
            <person name="Zimmermann W."/>
            <person name="Wedler H."/>
            <person name="Wambutt R."/>
            <person name="Purnelle B."/>
            <person name="Goffeau A."/>
            <person name="Cadieu E."/>
            <person name="Dreano S."/>
            <person name="Gloux S."/>
            <person name="Lelaure V."/>
            <person name="Mottier S."/>
            <person name="Galibert F."/>
            <person name="Aves S.J."/>
            <person name="Xiang Z."/>
            <person name="Hunt C."/>
            <person name="Moore K."/>
            <person name="Hurst S.M."/>
            <person name="Lucas M."/>
            <person name="Rochet M."/>
            <person name="Gaillardin C."/>
            <person name="Tallada V.A."/>
            <person name="Garzon A."/>
            <person name="Thode G."/>
            <person name="Daga R.R."/>
            <person name="Cruzado L."/>
            <person name="Jimenez J."/>
            <person name="Sanchez M."/>
            <person name="del Rey F."/>
            <person name="Benito J."/>
            <person name="Dominguez A."/>
            <person name="Revuelta J.L."/>
            <person name="Moreno S."/>
            <person name="Armstrong J."/>
            <person name="Forsburg S.L."/>
            <person name="Cerutti L."/>
            <person name="Lowe T."/>
            <person name="McCombie W.R."/>
            <person name="Paulsen I."/>
            <person name="Potashkin J."/>
            <person name="Shpakovski G.V."/>
            <person name="Ussery D."/>
            <person name="Barrell B.G."/>
            <person name="Nurse P."/>
        </authorList>
    </citation>
    <scope>NUCLEOTIDE SEQUENCE [LARGE SCALE GENOMIC DNA]</scope>
    <source>
        <strain>972 / ATCC 24843</strain>
    </source>
</reference>
<reference key="2">
    <citation type="journal article" date="2006" name="Nat. Biotechnol.">
        <title>ORFeome cloning and global analysis of protein localization in the fission yeast Schizosaccharomyces pombe.</title>
        <authorList>
            <person name="Matsuyama A."/>
            <person name="Arai R."/>
            <person name="Yashiroda Y."/>
            <person name="Shirai A."/>
            <person name="Kamata A."/>
            <person name="Sekido S."/>
            <person name="Kobayashi Y."/>
            <person name="Hashimoto A."/>
            <person name="Hamamoto M."/>
            <person name="Hiraoka Y."/>
            <person name="Horinouchi S."/>
            <person name="Yoshida M."/>
        </authorList>
    </citation>
    <scope>SUBCELLULAR LOCATION [LARGE SCALE ANALYSIS]</scope>
</reference>
<reference key="3">
    <citation type="journal article" date="2008" name="J. Proteome Res.">
        <title>Phosphoproteome analysis of fission yeast.</title>
        <authorList>
            <person name="Wilson-Grady J.T."/>
            <person name="Villen J."/>
            <person name="Gygi S.P."/>
        </authorList>
    </citation>
    <scope>PHOSPHORYLATION [LARGE SCALE ANALYSIS] AT SER-56; SER-61; SER-63; SER-110 AND SER-111</scope>
    <scope>IDENTIFICATION BY MASS SPECTROMETRY</scope>
</reference>
<feature type="chain" id="PRO_0000116835" description="Ribosome quality control complex subunit 1">
    <location>
        <begin position="1"/>
        <end position="656"/>
    </location>
</feature>
<feature type="region of interest" description="Disordered" evidence="2">
    <location>
        <begin position="1"/>
        <end position="35"/>
    </location>
</feature>
<feature type="region of interest" description="Disordered" evidence="2">
    <location>
        <begin position="51"/>
        <end position="122"/>
    </location>
</feature>
<feature type="region of interest" description="Disordered" evidence="2">
    <location>
        <begin position="634"/>
        <end position="656"/>
    </location>
</feature>
<feature type="compositionally biased region" description="Basic residues" evidence="2">
    <location>
        <begin position="1"/>
        <end position="11"/>
    </location>
</feature>
<feature type="compositionally biased region" description="Acidic residues" evidence="2">
    <location>
        <begin position="17"/>
        <end position="32"/>
    </location>
</feature>
<feature type="compositionally biased region" description="Basic and acidic residues" evidence="2">
    <location>
        <begin position="51"/>
        <end position="63"/>
    </location>
</feature>
<feature type="compositionally biased region" description="Basic residues" evidence="2">
    <location>
        <begin position="83"/>
        <end position="101"/>
    </location>
</feature>
<feature type="compositionally biased region" description="Basic and acidic residues" evidence="2">
    <location>
        <begin position="102"/>
        <end position="122"/>
    </location>
</feature>
<feature type="modified residue" description="Phosphoserine" evidence="4">
    <location>
        <position position="56"/>
    </location>
</feature>
<feature type="modified residue" description="Phosphoserine" evidence="4">
    <location>
        <position position="61"/>
    </location>
</feature>
<feature type="modified residue" description="Phosphoserine" evidence="4">
    <location>
        <position position="63"/>
    </location>
</feature>
<feature type="modified residue" description="Phosphoserine" evidence="4">
    <location>
        <position position="110"/>
    </location>
</feature>
<feature type="modified residue" description="Phosphoserine" evidence="4">
    <location>
        <position position="111"/>
    </location>
</feature>
<name>RCQ1_SCHPO</name>
<accession>O13796</accession>
<accession>Q9P7G1</accession>
<organism>
    <name type="scientific">Schizosaccharomyces pombe (strain 972 / ATCC 24843)</name>
    <name type="common">Fission yeast</name>
    <dbReference type="NCBI Taxonomy" id="284812"/>
    <lineage>
        <taxon>Eukaryota</taxon>
        <taxon>Fungi</taxon>
        <taxon>Dikarya</taxon>
        <taxon>Ascomycota</taxon>
        <taxon>Taphrinomycotina</taxon>
        <taxon>Schizosaccharomycetes</taxon>
        <taxon>Schizosaccharomycetales</taxon>
        <taxon>Schizosaccharomycetaceae</taxon>
        <taxon>Schizosaccharomyces</taxon>
    </lineage>
</organism>
<keyword id="KW-0963">Cytoplasm</keyword>
<keyword id="KW-0597">Phosphoprotein</keyword>
<keyword id="KW-1185">Reference proteome</keyword>
<comment type="function">
    <text evidence="1">Component of the ribosome quality control complex (RQC), a ribosome-associated complex that mediates ubiquitination and extraction of incompletely synthesized nascent chains for proteasomal degradation. Within the RQC complex, rqc1 is essential for the recruitment of cdc48 to incompletely synthesized nascent polypeptides that are ubiquitinated by rkr1/ltn1.</text>
</comment>
<comment type="subunit">
    <text evidence="1">Component of the ribosome quality control complex (RQC), composed of the E3 ubiquitin ligase rkr1/ltn1, rqc1 and mtr1/rqc2, as well as cdc48 and its ubiquitin-binding cofactors. RQC forms a stable complex with 60S ribosomal subunits.</text>
</comment>
<comment type="subcellular location">
    <subcellularLocation>
        <location evidence="3">Cytoplasm</location>
    </subcellularLocation>
</comment>
<comment type="similarity">
    <text evidence="5">Belongs to the TCF25 family.</text>
</comment>
<proteinExistence type="evidence at protein level"/>
<sequence length="656" mass="75015">MSSRALRKLQRQRQTELLEEALDSESDEDDEFSSTSGKKVVNVFEILEKENNAINSEAEKSVSEEEQDEPLVEGESPIVSTNKKAKNKKKKKKQQKKKKVTGKRDLDNQSSDNEKLEGLESSKNIDDDIDEIEKAAAELKLKYREQDQVEHVAGVEESATIPLDKELDEKLNKLLGVNISMLNPDLEIRKIFGRIVEKRSVNARHDNLRRKRHVLVQPQEGWPPLVRSGLGMKLTGQSQDLECFFEITQSRAYQEVQETFEYYVQTYDPNNLLMLLRSHPFHIDTLLQVSEIIDQQGDHELSAELVARGLYAFDSILHPRFNLATGATRLPFAIPSNRRLFLCIWRYLQSLQSRGCWRTVFEFCKALLQFDMSDPYAIGTCIDIYALRRREFAWIIDFANYLENSNKISDTPNMLYSSALAMFYVHGDTTDTRASMLAAFERAPYMLSELLDTLNISFTKSSIPSPQDPVQELHSAMYALYAKDSWSDPTVLAFINSILEKETVTLHDVEGQFAELTENLSRRVILLNEQSLRKFLPQRILQGTILSFDPLPPDTYLSESQVFGRDISRRIASFLSDYLSRAREVNENEEEPPAHEFDLPPAEQLLQQIESEVGEESEDGTPVMTRLRSFFGSLFTSTNSETEPAEESTEEMGQGD</sequence>
<protein>
    <recommendedName>
        <fullName evidence="1">Ribosome quality control complex subunit 1</fullName>
    </recommendedName>
</protein>
<dbReference type="EMBL" id="CU329670">
    <property type="protein sequence ID" value="CAB16229.2"/>
    <property type="molecule type" value="Genomic_DNA"/>
</dbReference>
<dbReference type="PIR" id="T37850">
    <property type="entry name" value="T37850"/>
</dbReference>
<dbReference type="RefSeq" id="NP_594265.2">
    <property type="nucleotide sequence ID" value="NM_001019688.3"/>
</dbReference>
<dbReference type="SMR" id="O13796"/>
<dbReference type="BioGRID" id="278672">
    <property type="interactions" value="16"/>
</dbReference>
<dbReference type="FunCoup" id="O13796">
    <property type="interactions" value="509"/>
</dbReference>
<dbReference type="STRING" id="284812.O13796"/>
<dbReference type="iPTMnet" id="O13796"/>
<dbReference type="PaxDb" id="4896-SPAC1142.01.1"/>
<dbReference type="EnsemblFungi" id="SPAC1142.01.1">
    <property type="protein sequence ID" value="SPAC1142.01.1:pep"/>
    <property type="gene ID" value="SPAC1142.01"/>
</dbReference>
<dbReference type="PomBase" id="SPAC1142.01">
    <property type="gene designation" value="rqc1"/>
</dbReference>
<dbReference type="VEuPathDB" id="FungiDB:SPAC1142.01"/>
<dbReference type="eggNOG" id="KOG2422">
    <property type="taxonomic scope" value="Eukaryota"/>
</dbReference>
<dbReference type="HOGENOM" id="CLU_008321_1_1_1"/>
<dbReference type="InParanoid" id="O13796"/>
<dbReference type="OMA" id="IWGKMPP"/>
<dbReference type="PhylomeDB" id="O13796"/>
<dbReference type="PRO" id="PR:O13796"/>
<dbReference type="Proteomes" id="UP000002485">
    <property type="component" value="Chromosome I"/>
</dbReference>
<dbReference type="GO" id="GO:0005829">
    <property type="term" value="C:cytosol"/>
    <property type="evidence" value="ECO:0007005"/>
    <property type="project" value="PomBase"/>
</dbReference>
<dbReference type="GO" id="GO:1990112">
    <property type="term" value="C:RQC complex"/>
    <property type="evidence" value="ECO:0000318"/>
    <property type="project" value="GO_Central"/>
</dbReference>
<dbReference type="GO" id="GO:0072344">
    <property type="term" value="P:rescue of stalled ribosome"/>
    <property type="evidence" value="ECO:0000318"/>
    <property type="project" value="GO_Central"/>
</dbReference>
<dbReference type="GO" id="GO:1990116">
    <property type="term" value="P:ribosome-associated ubiquitin-dependent protein catabolic process"/>
    <property type="evidence" value="ECO:0000316"/>
    <property type="project" value="PomBase"/>
</dbReference>
<dbReference type="InterPro" id="IPR006994">
    <property type="entry name" value="TCF25/Rqc1"/>
</dbReference>
<dbReference type="PANTHER" id="PTHR22684">
    <property type="entry name" value="NULP1-RELATED"/>
    <property type="match status" value="1"/>
</dbReference>
<dbReference type="PANTHER" id="PTHR22684:SF0">
    <property type="entry name" value="RIBOSOME QUALITY CONTROL COMPLEX SUBUNIT TCF25"/>
    <property type="match status" value="1"/>
</dbReference>
<dbReference type="Pfam" id="PF04910">
    <property type="entry name" value="Tcf25"/>
    <property type="match status" value="1"/>
</dbReference>